<gene>
    <name type="primary">gnd</name>
    <name type="ordered locus">BUsg_100</name>
</gene>
<name>6PGD_BUCAP</name>
<sequence>MLKQQVGVIGMAVMGRNLALNIESKKYTVSIFNRTQSVTEEVINNNKEKKIFPYFSIKDFVNSLRKPRCILLMVKSGQPTDETIQFILPYLNKGDILIDGGNTFYKDSIRRSNDLMKCGINFIGMGVSGGELGALNGPSIMPGGSREAYDLVSSMLKKISAKFKNEPCVSYIGPNGAGHYVKMIHNGIEYGDMQLISESYFILKNVLNMKNEELSNTFSQWNKGELNSYLIEITKNIFLKKEKDGIHYLIDSILDHAEDKGTGKWISQDALELHEPLSLITESVFARYLSSLKDQRLIASKILKGPILKCISSQNKELFVEEVRRALYLGKIISYAQGFSQLKKASEKYSWNLQYGKIAKIFRAGCIIRADFLERITDAFKSNNVTNLLLTPYFSEISNKYEKSLRYITSYAIKYGIPVPTFASAISYYDNYRTMSSSANLIQAQRDYFGAHTYRRTDKKGYFHTNWLTKKEL</sequence>
<reference key="1">
    <citation type="journal article" date="1998" name="Curr. Microbiol.">
        <title>Buchnera aphidicola (Aphid endosymbiont) contains genes encoding enzymes of histidine biosynthesis.</title>
        <authorList>
            <person name="Clark M.A."/>
            <person name="Baumann L."/>
            <person name="Baumann P."/>
        </authorList>
    </citation>
    <scope>NUCLEOTIDE SEQUENCE [GENOMIC DNA]</scope>
</reference>
<reference key="2">
    <citation type="journal article" date="2002" name="Science">
        <title>50 million years of genomic stasis in endosymbiotic bacteria.</title>
        <authorList>
            <person name="Tamas I."/>
            <person name="Klasson L."/>
            <person name="Canbaeck B."/>
            <person name="Naeslund A.K."/>
            <person name="Eriksson A.-S."/>
            <person name="Wernegreen J.J."/>
            <person name="Sandstroem J.P."/>
            <person name="Moran N.A."/>
            <person name="Andersson S.G.E."/>
        </authorList>
    </citation>
    <scope>NUCLEOTIDE SEQUENCE [LARGE SCALE GENOMIC DNA]</scope>
    <source>
        <strain>Sg</strain>
    </source>
</reference>
<dbReference type="EC" id="1.1.1.44"/>
<dbReference type="EMBL" id="AF067228">
    <property type="protein sequence ID" value="AAC97362.1"/>
    <property type="molecule type" value="Genomic_DNA"/>
</dbReference>
<dbReference type="EMBL" id="AE013218">
    <property type="protein sequence ID" value="AAM67670.1"/>
    <property type="molecule type" value="Genomic_DNA"/>
</dbReference>
<dbReference type="RefSeq" id="WP_011053636.1">
    <property type="nucleotide sequence ID" value="NC_004061.1"/>
</dbReference>
<dbReference type="SMR" id="Q9ZHD9"/>
<dbReference type="STRING" id="198804.BUsg_100"/>
<dbReference type="GeneID" id="93003569"/>
<dbReference type="KEGG" id="bas:BUsg_100"/>
<dbReference type="eggNOG" id="COG0362">
    <property type="taxonomic scope" value="Bacteria"/>
</dbReference>
<dbReference type="HOGENOM" id="CLU_024540_4_2_6"/>
<dbReference type="UniPathway" id="UPA00115">
    <property type="reaction ID" value="UER00410"/>
</dbReference>
<dbReference type="Proteomes" id="UP000000416">
    <property type="component" value="Chromosome"/>
</dbReference>
<dbReference type="GO" id="GO:0050661">
    <property type="term" value="F:NADP binding"/>
    <property type="evidence" value="ECO:0007669"/>
    <property type="project" value="InterPro"/>
</dbReference>
<dbReference type="GO" id="GO:0004616">
    <property type="term" value="F:phosphogluconate dehydrogenase (decarboxylating) activity"/>
    <property type="evidence" value="ECO:0000250"/>
    <property type="project" value="UniProtKB"/>
</dbReference>
<dbReference type="GO" id="GO:0019521">
    <property type="term" value="P:D-gluconate metabolic process"/>
    <property type="evidence" value="ECO:0007669"/>
    <property type="project" value="UniProtKB-KW"/>
</dbReference>
<dbReference type="GO" id="GO:0016054">
    <property type="term" value="P:organic acid catabolic process"/>
    <property type="evidence" value="ECO:0007669"/>
    <property type="project" value="UniProtKB-ARBA"/>
</dbReference>
<dbReference type="GO" id="GO:0006098">
    <property type="term" value="P:pentose-phosphate shunt"/>
    <property type="evidence" value="ECO:0000250"/>
    <property type="project" value="UniProtKB"/>
</dbReference>
<dbReference type="FunFam" id="1.10.1040.10:FF:000002">
    <property type="entry name" value="6-phosphogluconate dehydrogenase, decarboxylating"/>
    <property type="match status" value="1"/>
</dbReference>
<dbReference type="FunFam" id="1.20.5.320:FF:000001">
    <property type="entry name" value="6-phosphogluconate dehydrogenase, decarboxylating"/>
    <property type="match status" value="1"/>
</dbReference>
<dbReference type="FunFam" id="3.40.50.720:FF:000007">
    <property type="entry name" value="6-phosphogluconate dehydrogenase, decarboxylating"/>
    <property type="match status" value="1"/>
</dbReference>
<dbReference type="Gene3D" id="1.20.5.320">
    <property type="entry name" value="6-Phosphogluconate Dehydrogenase, domain 3"/>
    <property type="match status" value="1"/>
</dbReference>
<dbReference type="Gene3D" id="1.10.1040.10">
    <property type="entry name" value="N-(1-d-carboxylethyl)-l-norvaline Dehydrogenase, domain 2"/>
    <property type="match status" value="1"/>
</dbReference>
<dbReference type="Gene3D" id="3.40.50.720">
    <property type="entry name" value="NAD(P)-binding Rossmann-like Domain"/>
    <property type="match status" value="1"/>
</dbReference>
<dbReference type="InterPro" id="IPR008927">
    <property type="entry name" value="6-PGluconate_DH-like_C_sf"/>
</dbReference>
<dbReference type="InterPro" id="IPR013328">
    <property type="entry name" value="6PGD_dom2"/>
</dbReference>
<dbReference type="InterPro" id="IPR006114">
    <property type="entry name" value="6PGDH_C"/>
</dbReference>
<dbReference type="InterPro" id="IPR006113">
    <property type="entry name" value="6PGDH_Gnd/GntZ"/>
</dbReference>
<dbReference type="InterPro" id="IPR006115">
    <property type="entry name" value="6PGDH_NADP-bd"/>
</dbReference>
<dbReference type="InterPro" id="IPR006184">
    <property type="entry name" value="6PGdom_BS"/>
</dbReference>
<dbReference type="InterPro" id="IPR036291">
    <property type="entry name" value="NAD(P)-bd_dom_sf"/>
</dbReference>
<dbReference type="InterPro" id="IPR006183">
    <property type="entry name" value="Pgluconate_DH"/>
</dbReference>
<dbReference type="NCBIfam" id="TIGR00873">
    <property type="entry name" value="gnd"/>
    <property type="match status" value="1"/>
</dbReference>
<dbReference type="NCBIfam" id="NF006765">
    <property type="entry name" value="PRK09287.1"/>
    <property type="match status" value="1"/>
</dbReference>
<dbReference type="PANTHER" id="PTHR11811">
    <property type="entry name" value="6-PHOSPHOGLUCONATE DEHYDROGENASE"/>
    <property type="match status" value="1"/>
</dbReference>
<dbReference type="Pfam" id="PF00393">
    <property type="entry name" value="6PGD"/>
    <property type="match status" value="1"/>
</dbReference>
<dbReference type="Pfam" id="PF03446">
    <property type="entry name" value="NAD_binding_2"/>
    <property type="match status" value="1"/>
</dbReference>
<dbReference type="PIRSF" id="PIRSF000109">
    <property type="entry name" value="6PGD"/>
    <property type="match status" value="1"/>
</dbReference>
<dbReference type="PRINTS" id="PR00076">
    <property type="entry name" value="6PGDHDRGNASE"/>
</dbReference>
<dbReference type="SMART" id="SM01350">
    <property type="entry name" value="6PGD"/>
    <property type="match status" value="1"/>
</dbReference>
<dbReference type="SUPFAM" id="SSF48179">
    <property type="entry name" value="6-phosphogluconate dehydrogenase C-terminal domain-like"/>
    <property type="match status" value="1"/>
</dbReference>
<dbReference type="SUPFAM" id="SSF51735">
    <property type="entry name" value="NAD(P)-binding Rossmann-fold domains"/>
    <property type="match status" value="1"/>
</dbReference>
<dbReference type="PROSITE" id="PS00461">
    <property type="entry name" value="6PGD"/>
    <property type="match status" value="1"/>
</dbReference>
<evidence type="ECO:0000250" key="1"/>
<evidence type="ECO:0000305" key="2"/>
<proteinExistence type="inferred from homology"/>
<accession>Q9ZHD9</accession>
<organism>
    <name type="scientific">Buchnera aphidicola subsp. Schizaphis graminum (strain Sg)</name>
    <dbReference type="NCBI Taxonomy" id="198804"/>
    <lineage>
        <taxon>Bacteria</taxon>
        <taxon>Pseudomonadati</taxon>
        <taxon>Pseudomonadota</taxon>
        <taxon>Gammaproteobacteria</taxon>
        <taxon>Enterobacterales</taxon>
        <taxon>Erwiniaceae</taxon>
        <taxon>Buchnera</taxon>
    </lineage>
</organism>
<comment type="function">
    <text evidence="1">Catalyzes the oxidative decarboxylation of 6-phosphogluconate to ribulose 5-phosphate and CO(2), with concomitant reduction of NADP to NADPH.</text>
</comment>
<comment type="catalytic activity">
    <reaction>
        <text>6-phospho-D-gluconate + NADP(+) = D-ribulose 5-phosphate + CO2 + NADPH</text>
        <dbReference type="Rhea" id="RHEA:10116"/>
        <dbReference type="ChEBI" id="CHEBI:16526"/>
        <dbReference type="ChEBI" id="CHEBI:57783"/>
        <dbReference type="ChEBI" id="CHEBI:58121"/>
        <dbReference type="ChEBI" id="CHEBI:58349"/>
        <dbReference type="ChEBI" id="CHEBI:58759"/>
        <dbReference type="EC" id="1.1.1.44"/>
    </reaction>
</comment>
<comment type="pathway">
    <text>Carbohydrate degradation; pentose phosphate pathway; D-ribulose 5-phosphate from D-glucose 6-phosphate (oxidative stage): step 3/3.</text>
</comment>
<comment type="subunit">
    <text evidence="1">Homodimer.</text>
</comment>
<comment type="similarity">
    <text evidence="2">Belongs to the 6-phosphogluconate dehydrogenase family.</text>
</comment>
<keyword id="KW-0311">Gluconate utilization</keyword>
<keyword id="KW-0521">NADP</keyword>
<keyword id="KW-0560">Oxidoreductase</keyword>
<keyword id="KW-0570">Pentose shunt</keyword>
<feature type="chain" id="PRO_0000090029" description="6-phosphogluconate dehydrogenase, decarboxylating">
    <location>
        <begin position="1"/>
        <end position="473"/>
    </location>
</feature>
<feature type="active site" description="Proton acceptor" evidence="1">
    <location>
        <position position="182"/>
    </location>
</feature>
<feature type="active site" description="Proton donor" evidence="1">
    <location>
        <position position="189"/>
    </location>
</feature>
<feature type="binding site" evidence="1">
    <location>
        <begin position="10"/>
        <end position="15"/>
    </location>
    <ligand>
        <name>NADP(+)</name>
        <dbReference type="ChEBI" id="CHEBI:58349"/>
    </ligand>
</feature>
<feature type="binding site" evidence="1">
    <location>
        <begin position="33"/>
        <end position="35"/>
    </location>
    <ligand>
        <name>NADP(+)</name>
        <dbReference type="ChEBI" id="CHEBI:58349"/>
    </ligand>
</feature>
<feature type="binding site" evidence="1">
    <location>
        <begin position="74"/>
        <end position="76"/>
    </location>
    <ligand>
        <name>NADP(+)</name>
        <dbReference type="ChEBI" id="CHEBI:58349"/>
    </ligand>
</feature>
<feature type="binding site" evidence="1">
    <location>
        <position position="102"/>
    </location>
    <ligand>
        <name>NADP(+)</name>
        <dbReference type="ChEBI" id="CHEBI:58349"/>
    </ligand>
</feature>
<feature type="binding site" description="in other chain" evidence="1">
    <location>
        <position position="102"/>
    </location>
    <ligand>
        <name>substrate</name>
        <note>ligand shared between dimeric partners</note>
    </ligand>
</feature>
<feature type="binding site" description="in other chain" evidence="1">
    <location>
        <begin position="128"/>
        <end position="130"/>
    </location>
    <ligand>
        <name>substrate</name>
        <note>ligand shared between dimeric partners</note>
    </ligand>
</feature>
<feature type="binding site" description="in other chain" evidence="1">
    <location>
        <begin position="185"/>
        <end position="186"/>
    </location>
    <ligand>
        <name>substrate</name>
        <note>ligand shared between dimeric partners</note>
    </ligand>
</feature>
<feature type="binding site" description="in other chain" evidence="1">
    <location>
        <position position="190"/>
    </location>
    <ligand>
        <name>substrate</name>
        <note>ligand shared between dimeric partners</note>
    </ligand>
</feature>
<feature type="binding site" description="in other chain" evidence="1">
    <location>
        <position position="260"/>
    </location>
    <ligand>
        <name>substrate</name>
        <note>ligand shared between dimeric partners</note>
    </ligand>
</feature>
<feature type="binding site" description="in other chain" evidence="1">
    <location>
        <position position="287"/>
    </location>
    <ligand>
        <name>substrate</name>
        <note>ligand shared between dimeric partners</note>
    </ligand>
</feature>
<feature type="binding site" evidence="1">
    <location>
        <position position="446"/>
    </location>
    <ligand>
        <name>substrate</name>
        <note>ligand shared between dimeric partners</note>
    </ligand>
</feature>
<feature type="binding site" evidence="1">
    <location>
        <position position="452"/>
    </location>
    <ligand>
        <name>substrate</name>
        <note>ligand shared between dimeric partners</note>
    </ligand>
</feature>
<feature type="sequence conflict" description="In Ref. 1; AAC97362." evidence="2" ref="1">
    <original>K</original>
    <variation>N</variation>
    <location>
        <position position="158"/>
    </location>
</feature>
<feature type="sequence conflict" description="In Ref. 1; AAC97362." evidence="2" ref="1">
    <original>RRA</original>
    <variation>TKS</variation>
    <location>
        <begin position="324"/>
        <end position="326"/>
    </location>
</feature>
<feature type="sequence conflict" description="In Ref. 1; AAC97362." evidence="2" ref="1">
    <original>K</original>
    <variation>I</variation>
    <location>
        <position position="348"/>
    </location>
</feature>
<protein>
    <recommendedName>
        <fullName>6-phosphogluconate dehydrogenase, decarboxylating</fullName>
        <ecNumber>1.1.1.44</ecNumber>
    </recommendedName>
</protein>